<dbReference type="EMBL" id="CP000517">
    <property type="protein sequence ID" value="ABX27384.1"/>
    <property type="molecule type" value="Genomic_DNA"/>
</dbReference>
<dbReference type="RefSeq" id="WP_003627575.1">
    <property type="nucleotide sequence ID" value="NC_010080.1"/>
</dbReference>
<dbReference type="SMR" id="A8YVV4"/>
<dbReference type="KEGG" id="lhe:lhv_1397"/>
<dbReference type="eggNOG" id="COG0227">
    <property type="taxonomic scope" value="Bacteria"/>
</dbReference>
<dbReference type="HOGENOM" id="CLU_064548_7_1_9"/>
<dbReference type="Proteomes" id="UP000000790">
    <property type="component" value="Chromosome"/>
</dbReference>
<dbReference type="GO" id="GO:1990904">
    <property type="term" value="C:ribonucleoprotein complex"/>
    <property type="evidence" value="ECO:0007669"/>
    <property type="project" value="UniProtKB-KW"/>
</dbReference>
<dbReference type="GO" id="GO:0005840">
    <property type="term" value="C:ribosome"/>
    <property type="evidence" value="ECO:0007669"/>
    <property type="project" value="UniProtKB-KW"/>
</dbReference>
<dbReference type="GO" id="GO:0003735">
    <property type="term" value="F:structural constituent of ribosome"/>
    <property type="evidence" value="ECO:0007669"/>
    <property type="project" value="InterPro"/>
</dbReference>
<dbReference type="GO" id="GO:0006412">
    <property type="term" value="P:translation"/>
    <property type="evidence" value="ECO:0007669"/>
    <property type="project" value="UniProtKB-UniRule"/>
</dbReference>
<dbReference type="Gene3D" id="2.30.170.40">
    <property type="entry name" value="Ribosomal protein L28/L24"/>
    <property type="match status" value="1"/>
</dbReference>
<dbReference type="HAMAP" id="MF_00373">
    <property type="entry name" value="Ribosomal_bL28"/>
    <property type="match status" value="1"/>
</dbReference>
<dbReference type="InterPro" id="IPR050096">
    <property type="entry name" value="Bacterial_rp_bL28"/>
</dbReference>
<dbReference type="InterPro" id="IPR026569">
    <property type="entry name" value="Ribosomal_bL28"/>
</dbReference>
<dbReference type="InterPro" id="IPR034704">
    <property type="entry name" value="Ribosomal_bL28/bL31-like_sf"/>
</dbReference>
<dbReference type="InterPro" id="IPR001383">
    <property type="entry name" value="Ribosomal_bL28_bact-type"/>
</dbReference>
<dbReference type="InterPro" id="IPR037147">
    <property type="entry name" value="Ribosomal_bL28_sf"/>
</dbReference>
<dbReference type="NCBIfam" id="TIGR00009">
    <property type="entry name" value="L28"/>
    <property type="match status" value="1"/>
</dbReference>
<dbReference type="PANTHER" id="PTHR39080">
    <property type="entry name" value="50S RIBOSOMAL PROTEIN L28"/>
    <property type="match status" value="1"/>
</dbReference>
<dbReference type="PANTHER" id="PTHR39080:SF1">
    <property type="entry name" value="LARGE RIBOSOMAL SUBUNIT PROTEIN BL28A"/>
    <property type="match status" value="1"/>
</dbReference>
<dbReference type="Pfam" id="PF00830">
    <property type="entry name" value="Ribosomal_L28"/>
    <property type="match status" value="1"/>
</dbReference>
<dbReference type="SUPFAM" id="SSF143800">
    <property type="entry name" value="L28p-like"/>
    <property type="match status" value="1"/>
</dbReference>
<sequence>MAKDYVTGKKTTFGNKRSHAMNSVRRAWKPNLQKVRILVDGKPKRVWVSTKALKSGKVTRA</sequence>
<organism>
    <name type="scientific">Lactobacillus helveticus (strain DPC 4571)</name>
    <dbReference type="NCBI Taxonomy" id="405566"/>
    <lineage>
        <taxon>Bacteria</taxon>
        <taxon>Bacillati</taxon>
        <taxon>Bacillota</taxon>
        <taxon>Bacilli</taxon>
        <taxon>Lactobacillales</taxon>
        <taxon>Lactobacillaceae</taxon>
        <taxon>Lactobacillus</taxon>
    </lineage>
</organism>
<reference key="1">
    <citation type="journal article" date="2008" name="J. Bacteriol.">
        <title>Genome sequence of Lactobacillus helveticus: an organism distinguished by selective gene loss and IS element expansion.</title>
        <authorList>
            <person name="Callanan M."/>
            <person name="Kaleta P."/>
            <person name="O'Callaghan J."/>
            <person name="O'Sullivan O."/>
            <person name="Jordan K."/>
            <person name="McAuliffe O."/>
            <person name="Sangrador-Vegas A."/>
            <person name="Slattery L."/>
            <person name="Fitzgerald G.F."/>
            <person name="Beresford T."/>
            <person name="Ross R.P."/>
        </authorList>
    </citation>
    <scope>NUCLEOTIDE SEQUENCE [LARGE SCALE GENOMIC DNA]</scope>
    <source>
        <strain>DPC 4571</strain>
    </source>
</reference>
<name>RL28_LACH4</name>
<gene>
    <name evidence="1" type="primary">rpmB</name>
    <name type="ordered locus">lhv_1397</name>
</gene>
<accession>A8YVV4</accession>
<comment type="similarity">
    <text evidence="1">Belongs to the bacterial ribosomal protein bL28 family.</text>
</comment>
<protein>
    <recommendedName>
        <fullName evidence="1">Large ribosomal subunit protein bL28</fullName>
    </recommendedName>
    <alternativeName>
        <fullName evidence="3">50S ribosomal protein L28</fullName>
    </alternativeName>
</protein>
<feature type="chain" id="PRO_1000072135" description="Large ribosomal subunit protein bL28">
    <location>
        <begin position="1"/>
        <end position="61"/>
    </location>
</feature>
<feature type="region of interest" description="Disordered" evidence="2">
    <location>
        <begin position="1"/>
        <end position="21"/>
    </location>
</feature>
<evidence type="ECO:0000255" key="1">
    <source>
        <dbReference type="HAMAP-Rule" id="MF_00373"/>
    </source>
</evidence>
<evidence type="ECO:0000256" key="2">
    <source>
        <dbReference type="SAM" id="MobiDB-lite"/>
    </source>
</evidence>
<evidence type="ECO:0000305" key="3"/>
<keyword id="KW-0687">Ribonucleoprotein</keyword>
<keyword id="KW-0689">Ribosomal protein</keyword>
<proteinExistence type="inferred from homology"/>